<name>RS14_BRUO2</name>
<proteinExistence type="inferred from homology"/>
<sequence>MAKTSAVEKNKRREKLVKRHAVKRARLKAIVMDQGLPLEERFRATIRLAELPRNSAKVRIRNRCEVSGRPRGYYRKLKMSRIALRQLGSLGQIPGVVKSSW</sequence>
<evidence type="ECO:0000255" key="1">
    <source>
        <dbReference type="HAMAP-Rule" id="MF_00537"/>
    </source>
</evidence>
<evidence type="ECO:0000305" key="2"/>
<gene>
    <name evidence="1" type="primary">rpsN</name>
    <name type="ordered locus">BOV_1183</name>
</gene>
<reference key="1">
    <citation type="journal article" date="2009" name="PLoS ONE">
        <title>Genome degradation in Brucella ovis corresponds with narrowing of its host range and tissue tropism.</title>
        <authorList>
            <person name="Tsolis R.M."/>
            <person name="Seshadri R."/>
            <person name="Santos R.L."/>
            <person name="Sangari F.J."/>
            <person name="Lobo J.M."/>
            <person name="de Jong M.F."/>
            <person name="Ren Q."/>
            <person name="Myers G."/>
            <person name="Brinkac L.M."/>
            <person name="Nelson W.C."/>
            <person name="Deboy R.T."/>
            <person name="Angiuoli S."/>
            <person name="Khouri H."/>
            <person name="Dimitrov G."/>
            <person name="Robinson J.R."/>
            <person name="Mulligan S."/>
            <person name="Walker R.L."/>
            <person name="Elzer P.E."/>
            <person name="Hassan K.A."/>
            <person name="Paulsen I.T."/>
        </authorList>
    </citation>
    <scope>NUCLEOTIDE SEQUENCE [LARGE SCALE GENOMIC DNA]</scope>
    <source>
        <strain>ATCC 25840 / 63/290 / NCTC 10512</strain>
    </source>
</reference>
<dbReference type="EMBL" id="CP000708">
    <property type="protein sequence ID" value="ABQ61855.1"/>
    <property type="molecule type" value="Genomic_DNA"/>
</dbReference>
<dbReference type="RefSeq" id="WP_002964349.1">
    <property type="nucleotide sequence ID" value="NC_009505.1"/>
</dbReference>
<dbReference type="SMR" id="A5VQZ3"/>
<dbReference type="GeneID" id="97533537"/>
<dbReference type="KEGG" id="bov:BOV_1183"/>
<dbReference type="HOGENOM" id="CLU_139869_0_1_5"/>
<dbReference type="Proteomes" id="UP000006383">
    <property type="component" value="Chromosome I"/>
</dbReference>
<dbReference type="GO" id="GO:0005737">
    <property type="term" value="C:cytoplasm"/>
    <property type="evidence" value="ECO:0007669"/>
    <property type="project" value="UniProtKB-ARBA"/>
</dbReference>
<dbReference type="GO" id="GO:0015935">
    <property type="term" value="C:small ribosomal subunit"/>
    <property type="evidence" value="ECO:0007669"/>
    <property type="project" value="TreeGrafter"/>
</dbReference>
<dbReference type="GO" id="GO:0019843">
    <property type="term" value="F:rRNA binding"/>
    <property type="evidence" value="ECO:0007669"/>
    <property type="project" value="UniProtKB-UniRule"/>
</dbReference>
<dbReference type="GO" id="GO:0003735">
    <property type="term" value="F:structural constituent of ribosome"/>
    <property type="evidence" value="ECO:0007669"/>
    <property type="project" value="InterPro"/>
</dbReference>
<dbReference type="GO" id="GO:0006412">
    <property type="term" value="P:translation"/>
    <property type="evidence" value="ECO:0007669"/>
    <property type="project" value="UniProtKB-UniRule"/>
</dbReference>
<dbReference type="FunFam" id="1.10.287.1480:FF:000001">
    <property type="entry name" value="30S ribosomal protein S14"/>
    <property type="match status" value="1"/>
</dbReference>
<dbReference type="Gene3D" id="1.10.287.1480">
    <property type="match status" value="1"/>
</dbReference>
<dbReference type="HAMAP" id="MF_00537">
    <property type="entry name" value="Ribosomal_uS14_1"/>
    <property type="match status" value="1"/>
</dbReference>
<dbReference type="InterPro" id="IPR001209">
    <property type="entry name" value="Ribosomal_uS14"/>
</dbReference>
<dbReference type="InterPro" id="IPR023036">
    <property type="entry name" value="Ribosomal_uS14_bac/plastid"/>
</dbReference>
<dbReference type="InterPro" id="IPR018271">
    <property type="entry name" value="Ribosomal_uS14_CS"/>
</dbReference>
<dbReference type="NCBIfam" id="NF006477">
    <property type="entry name" value="PRK08881.1"/>
    <property type="match status" value="1"/>
</dbReference>
<dbReference type="PANTHER" id="PTHR19836">
    <property type="entry name" value="30S RIBOSOMAL PROTEIN S14"/>
    <property type="match status" value="1"/>
</dbReference>
<dbReference type="PANTHER" id="PTHR19836:SF19">
    <property type="entry name" value="SMALL RIBOSOMAL SUBUNIT PROTEIN US14M"/>
    <property type="match status" value="1"/>
</dbReference>
<dbReference type="Pfam" id="PF00253">
    <property type="entry name" value="Ribosomal_S14"/>
    <property type="match status" value="1"/>
</dbReference>
<dbReference type="SUPFAM" id="SSF57716">
    <property type="entry name" value="Glucocorticoid receptor-like (DNA-binding domain)"/>
    <property type="match status" value="1"/>
</dbReference>
<dbReference type="PROSITE" id="PS00527">
    <property type="entry name" value="RIBOSOMAL_S14"/>
    <property type="match status" value="1"/>
</dbReference>
<accession>A5VQZ3</accession>
<keyword id="KW-0687">Ribonucleoprotein</keyword>
<keyword id="KW-0689">Ribosomal protein</keyword>
<keyword id="KW-0694">RNA-binding</keyword>
<keyword id="KW-0699">rRNA-binding</keyword>
<protein>
    <recommendedName>
        <fullName evidence="1">Small ribosomal subunit protein uS14</fullName>
    </recommendedName>
    <alternativeName>
        <fullName evidence="2">30S ribosomal protein S14</fullName>
    </alternativeName>
</protein>
<feature type="chain" id="PRO_1000128323" description="Small ribosomal subunit protein uS14">
    <location>
        <begin position="1"/>
        <end position="101"/>
    </location>
</feature>
<organism>
    <name type="scientific">Brucella ovis (strain ATCC 25840 / 63/290 / NCTC 10512)</name>
    <dbReference type="NCBI Taxonomy" id="444178"/>
    <lineage>
        <taxon>Bacteria</taxon>
        <taxon>Pseudomonadati</taxon>
        <taxon>Pseudomonadota</taxon>
        <taxon>Alphaproteobacteria</taxon>
        <taxon>Hyphomicrobiales</taxon>
        <taxon>Brucellaceae</taxon>
        <taxon>Brucella/Ochrobactrum group</taxon>
        <taxon>Brucella</taxon>
    </lineage>
</organism>
<comment type="function">
    <text evidence="1">Binds 16S rRNA, required for the assembly of 30S particles and may also be responsible for determining the conformation of the 16S rRNA at the A site.</text>
</comment>
<comment type="subunit">
    <text evidence="1">Part of the 30S ribosomal subunit. Contacts proteins S3 and S10.</text>
</comment>
<comment type="similarity">
    <text evidence="1">Belongs to the universal ribosomal protein uS14 family.</text>
</comment>